<accession>Q5MZ45</accession>
<evidence type="ECO:0000255" key="1">
    <source>
        <dbReference type="HAMAP-Rule" id="MF_00735"/>
    </source>
</evidence>
<proteinExistence type="inferred from homology"/>
<name>PRMA_SYNP6</name>
<keyword id="KW-0963">Cytoplasm</keyword>
<keyword id="KW-0489">Methyltransferase</keyword>
<keyword id="KW-0949">S-adenosyl-L-methionine</keyword>
<keyword id="KW-0808">Transferase</keyword>
<sequence>MPVSQSWWQVEVHCDPLLEDLLYWRLSEAGGRGFVCESKAQGLQVHSYFPAELWEETIRDRLLQEINADAADLGLPTPSLSWQTLDEEDWSESWKRHWQPQELGDRFLIQPAWLEPEPSDRLLLQLDPGTAFGTGAHPTTQLCLEGLETVPVADKVIADVGCGSGILAIGALLLGAKQVYAVDTDPLAVGATQANAALNDLEGDRFWTAIGSADQLQPLHAQGVRFDGFLCNILAHIIQALTPTLSELASPGSWAIFSGLLTSQADTVSVTLEEYGWVIRDRASQGDWCRLVADFRPER</sequence>
<organism>
    <name type="scientific">Synechococcus sp. (strain ATCC 27144 / PCC 6301 / SAUG 1402/1)</name>
    <name type="common">Anacystis nidulans</name>
    <dbReference type="NCBI Taxonomy" id="269084"/>
    <lineage>
        <taxon>Bacteria</taxon>
        <taxon>Bacillati</taxon>
        <taxon>Cyanobacteriota</taxon>
        <taxon>Cyanophyceae</taxon>
        <taxon>Synechococcales</taxon>
        <taxon>Synechococcaceae</taxon>
        <taxon>Synechococcus</taxon>
    </lineage>
</organism>
<feature type="chain" id="PRO_1000132837" description="Ribosomal protein L11 methyltransferase">
    <location>
        <begin position="1"/>
        <end position="299"/>
    </location>
</feature>
<feature type="binding site" evidence="1">
    <location>
        <position position="140"/>
    </location>
    <ligand>
        <name>S-adenosyl-L-methionine</name>
        <dbReference type="ChEBI" id="CHEBI:59789"/>
    </ligand>
</feature>
<feature type="binding site" evidence="1">
    <location>
        <position position="161"/>
    </location>
    <ligand>
        <name>S-adenosyl-L-methionine</name>
        <dbReference type="ChEBI" id="CHEBI:59789"/>
    </ligand>
</feature>
<feature type="binding site" evidence="1">
    <location>
        <position position="183"/>
    </location>
    <ligand>
        <name>S-adenosyl-L-methionine</name>
        <dbReference type="ChEBI" id="CHEBI:59789"/>
    </ligand>
</feature>
<feature type="binding site" evidence="1">
    <location>
        <position position="232"/>
    </location>
    <ligand>
        <name>S-adenosyl-L-methionine</name>
        <dbReference type="ChEBI" id="CHEBI:59789"/>
    </ligand>
</feature>
<gene>
    <name evidence="1" type="primary">prmA</name>
    <name type="ordered locus">syc2485_c</name>
</gene>
<reference key="1">
    <citation type="journal article" date="2007" name="Photosyn. Res.">
        <title>Complete nucleotide sequence of the freshwater unicellular cyanobacterium Synechococcus elongatus PCC 6301 chromosome: gene content and organization.</title>
        <authorList>
            <person name="Sugita C."/>
            <person name="Ogata K."/>
            <person name="Shikata M."/>
            <person name="Jikuya H."/>
            <person name="Takano J."/>
            <person name="Furumichi M."/>
            <person name="Kanehisa M."/>
            <person name="Omata T."/>
            <person name="Sugiura M."/>
            <person name="Sugita M."/>
        </authorList>
    </citation>
    <scope>NUCLEOTIDE SEQUENCE [LARGE SCALE GENOMIC DNA]</scope>
    <source>
        <strain>ATCC 27144 / PCC 6301 / SAUG 1402/1</strain>
    </source>
</reference>
<dbReference type="EC" id="2.1.1.-" evidence="1"/>
<dbReference type="EMBL" id="AP008231">
    <property type="protein sequence ID" value="BAD80675.1"/>
    <property type="molecule type" value="Genomic_DNA"/>
</dbReference>
<dbReference type="RefSeq" id="WP_011244795.1">
    <property type="nucleotide sequence ID" value="NZ_CP085785.1"/>
</dbReference>
<dbReference type="SMR" id="Q5MZ45"/>
<dbReference type="GeneID" id="72430466"/>
<dbReference type="KEGG" id="syc:syc2485_c"/>
<dbReference type="eggNOG" id="COG2264">
    <property type="taxonomic scope" value="Bacteria"/>
</dbReference>
<dbReference type="Proteomes" id="UP000001175">
    <property type="component" value="Chromosome"/>
</dbReference>
<dbReference type="GO" id="GO:0005737">
    <property type="term" value="C:cytoplasm"/>
    <property type="evidence" value="ECO:0007669"/>
    <property type="project" value="UniProtKB-SubCell"/>
</dbReference>
<dbReference type="GO" id="GO:0016279">
    <property type="term" value="F:protein-lysine N-methyltransferase activity"/>
    <property type="evidence" value="ECO:0007669"/>
    <property type="project" value="RHEA"/>
</dbReference>
<dbReference type="GO" id="GO:0032259">
    <property type="term" value="P:methylation"/>
    <property type="evidence" value="ECO:0007669"/>
    <property type="project" value="UniProtKB-KW"/>
</dbReference>
<dbReference type="CDD" id="cd02440">
    <property type="entry name" value="AdoMet_MTases"/>
    <property type="match status" value="1"/>
</dbReference>
<dbReference type="Gene3D" id="3.40.50.150">
    <property type="entry name" value="Vaccinia Virus protein VP39"/>
    <property type="match status" value="1"/>
</dbReference>
<dbReference type="HAMAP" id="MF_00735">
    <property type="entry name" value="Methyltr_PrmA"/>
    <property type="match status" value="1"/>
</dbReference>
<dbReference type="InterPro" id="IPR050078">
    <property type="entry name" value="Ribosomal_L11_MeTrfase_PrmA"/>
</dbReference>
<dbReference type="InterPro" id="IPR004498">
    <property type="entry name" value="Ribosomal_PrmA_MeTrfase"/>
</dbReference>
<dbReference type="InterPro" id="IPR029063">
    <property type="entry name" value="SAM-dependent_MTases_sf"/>
</dbReference>
<dbReference type="NCBIfam" id="TIGR00406">
    <property type="entry name" value="prmA"/>
    <property type="match status" value="1"/>
</dbReference>
<dbReference type="PANTHER" id="PTHR43648">
    <property type="entry name" value="ELECTRON TRANSFER FLAVOPROTEIN BETA SUBUNIT LYSINE METHYLTRANSFERASE"/>
    <property type="match status" value="1"/>
</dbReference>
<dbReference type="PANTHER" id="PTHR43648:SF1">
    <property type="entry name" value="ELECTRON TRANSFER FLAVOPROTEIN BETA SUBUNIT LYSINE METHYLTRANSFERASE"/>
    <property type="match status" value="1"/>
</dbReference>
<dbReference type="Pfam" id="PF06325">
    <property type="entry name" value="PrmA"/>
    <property type="match status" value="1"/>
</dbReference>
<dbReference type="PIRSF" id="PIRSF000401">
    <property type="entry name" value="RPL11_MTase"/>
    <property type="match status" value="1"/>
</dbReference>
<dbReference type="SUPFAM" id="SSF53335">
    <property type="entry name" value="S-adenosyl-L-methionine-dependent methyltransferases"/>
    <property type="match status" value="1"/>
</dbReference>
<protein>
    <recommendedName>
        <fullName evidence="1">Ribosomal protein L11 methyltransferase</fullName>
        <shortName evidence="1">L11 Mtase</shortName>
        <ecNumber evidence="1">2.1.1.-</ecNumber>
    </recommendedName>
</protein>
<comment type="function">
    <text evidence="1">Methylates ribosomal protein L11.</text>
</comment>
<comment type="catalytic activity">
    <reaction evidence="1">
        <text>L-lysyl-[protein] + 3 S-adenosyl-L-methionine = N(6),N(6),N(6)-trimethyl-L-lysyl-[protein] + 3 S-adenosyl-L-homocysteine + 3 H(+)</text>
        <dbReference type="Rhea" id="RHEA:54192"/>
        <dbReference type="Rhea" id="RHEA-COMP:9752"/>
        <dbReference type="Rhea" id="RHEA-COMP:13826"/>
        <dbReference type="ChEBI" id="CHEBI:15378"/>
        <dbReference type="ChEBI" id="CHEBI:29969"/>
        <dbReference type="ChEBI" id="CHEBI:57856"/>
        <dbReference type="ChEBI" id="CHEBI:59789"/>
        <dbReference type="ChEBI" id="CHEBI:61961"/>
    </reaction>
</comment>
<comment type="subcellular location">
    <subcellularLocation>
        <location evidence="1">Cytoplasm</location>
    </subcellularLocation>
</comment>
<comment type="similarity">
    <text evidence="1">Belongs to the methyltransferase superfamily. PrmA family.</text>
</comment>